<name>TF2LX_HYLLA</name>
<reference key="1">
    <citation type="submission" date="2001-09" db="EMBL/GenBank/DDBJ databases">
        <title>Characterisation of a TGIF-like protein gene in the human Xq21.3-Yp11.2 homology block.</title>
        <authorList>
            <person name="Blanco-Arias P."/>
        </authorList>
    </citation>
    <scope>NUCLEOTIDE SEQUENCE [MRNA]</scope>
</reference>
<proteinExistence type="evidence at transcript level"/>
<protein>
    <recommendedName>
        <fullName>Homeobox protein TGIF2LX</fullName>
    </recommendedName>
    <alternativeName>
        <fullName>TGF-beta-induced transcription factor 2-like protein</fullName>
    </alternativeName>
    <alternativeName>
        <fullName>TGFB-induced factor 2-like protein, X-linked</fullName>
    </alternativeName>
    <alternativeName>
        <fullName>TGIF-like on the X</fullName>
    </alternativeName>
</protein>
<sequence length="241" mass="26360">MEAAADGSAETQSPVEKDSPAKTQSPAQDTSTVSRNSADTGKVLALPEHTKKPKGYLPAESVKILRDWMYKHRFKAYPSEEEKQMLSEKTNLSLSQISNWFINARRRILPDMLKRHGNDPNIGHETGKDAHATHLQSTDASVPAKSGPSGPENVQSLPVWPLPKGQMSGEKLPDPESAPSQNPTVIAQPKKKVKVSVTSPSSPEPVPPEEYPDFSSFQLLVDAAVQRAAELELEKKQEPNP</sequence>
<keyword id="KW-0238">DNA-binding</keyword>
<keyword id="KW-0371">Homeobox</keyword>
<keyword id="KW-0539">Nucleus</keyword>
<keyword id="KW-0804">Transcription</keyword>
<keyword id="KW-0805">Transcription regulation</keyword>
<evidence type="ECO:0000250" key="1"/>
<evidence type="ECO:0000255" key="2">
    <source>
        <dbReference type="PROSITE-ProRule" id="PRU00108"/>
    </source>
</evidence>
<evidence type="ECO:0000256" key="3">
    <source>
        <dbReference type="SAM" id="MobiDB-lite"/>
    </source>
</evidence>
<evidence type="ECO:0000305" key="4"/>
<organism>
    <name type="scientific">Hylobates lar</name>
    <name type="common">Lar gibbon</name>
    <name type="synonym">White-handed gibbon</name>
    <dbReference type="NCBI Taxonomy" id="9580"/>
    <lineage>
        <taxon>Eukaryota</taxon>
        <taxon>Metazoa</taxon>
        <taxon>Chordata</taxon>
        <taxon>Craniata</taxon>
        <taxon>Vertebrata</taxon>
        <taxon>Euteleostomi</taxon>
        <taxon>Mammalia</taxon>
        <taxon>Eutheria</taxon>
        <taxon>Euarchontoglires</taxon>
        <taxon>Primates</taxon>
        <taxon>Haplorrhini</taxon>
        <taxon>Catarrhini</taxon>
        <taxon>Hylobatidae</taxon>
        <taxon>Hylobates</taxon>
    </lineage>
</organism>
<gene>
    <name type="primary">TGIF2LX</name>
    <name type="synonym">TGIFLX</name>
</gene>
<accession>Q8MIE6</accession>
<comment type="function">
    <text evidence="1">May have a transcription role in testis.</text>
</comment>
<comment type="subcellular location">
    <subcellularLocation>
        <location evidence="2">Nucleus</location>
    </subcellularLocation>
</comment>
<comment type="similarity">
    <text evidence="4">Belongs to the TALE/TGIF homeobox family.</text>
</comment>
<feature type="chain" id="PRO_0000049325" description="Homeobox protein TGIF2LX">
    <location>
        <begin position="1"/>
        <end position="241"/>
    </location>
</feature>
<feature type="DNA-binding region" description="Homeobox; TALE-type" evidence="2">
    <location>
        <begin position="48"/>
        <end position="111"/>
    </location>
</feature>
<feature type="region of interest" description="Disordered" evidence="3">
    <location>
        <begin position="1"/>
        <end position="56"/>
    </location>
</feature>
<feature type="region of interest" description="Disordered" evidence="3">
    <location>
        <begin position="115"/>
        <end position="213"/>
    </location>
</feature>
<feature type="compositionally biased region" description="Polar residues" evidence="3">
    <location>
        <begin position="21"/>
        <end position="39"/>
    </location>
</feature>
<dbReference type="EMBL" id="AJ345076">
    <property type="protein sequence ID" value="CAC87898.1"/>
    <property type="molecule type" value="mRNA"/>
</dbReference>
<dbReference type="SMR" id="Q8MIE6"/>
<dbReference type="GO" id="GO:0005634">
    <property type="term" value="C:nucleus"/>
    <property type="evidence" value="ECO:0007669"/>
    <property type="project" value="UniProtKB-SubCell"/>
</dbReference>
<dbReference type="GO" id="GO:0003677">
    <property type="term" value="F:DNA binding"/>
    <property type="evidence" value="ECO:0007669"/>
    <property type="project" value="UniProtKB-KW"/>
</dbReference>
<dbReference type="GO" id="GO:0006355">
    <property type="term" value="P:regulation of DNA-templated transcription"/>
    <property type="evidence" value="ECO:0007669"/>
    <property type="project" value="InterPro"/>
</dbReference>
<dbReference type="CDD" id="cd00086">
    <property type="entry name" value="homeodomain"/>
    <property type="match status" value="1"/>
</dbReference>
<dbReference type="FunFam" id="1.10.10.60:FF:000059">
    <property type="entry name" value="TGFB-induced factor homeobox 1"/>
    <property type="match status" value="1"/>
</dbReference>
<dbReference type="Gene3D" id="1.10.10.60">
    <property type="entry name" value="Homeodomain-like"/>
    <property type="match status" value="1"/>
</dbReference>
<dbReference type="InterPro" id="IPR001356">
    <property type="entry name" value="HD"/>
</dbReference>
<dbReference type="InterPro" id="IPR009057">
    <property type="entry name" value="Homeodomain-like_sf"/>
</dbReference>
<dbReference type="InterPro" id="IPR008422">
    <property type="entry name" value="KN_HD"/>
</dbReference>
<dbReference type="InterPro" id="IPR050224">
    <property type="entry name" value="TALE_homeobox"/>
</dbReference>
<dbReference type="PANTHER" id="PTHR11850">
    <property type="entry name" value="HOMEOBOX PROTEIN TRANSCRIPTION FACTORS"/>
    <property type="match status" value="1"/>
</dbReference>
<dbReference type="Pfam" id="PF05920">
    <property type="entry name" value="Homeobox_KN"/>
    <property type="match status" value="1"/>
</dbReference>
<dbReference type="SMART" id="SM00389">
    <property type="entry name" value="HOX"/>
    <property type="match status" value="1"/>
</dbReference>
<dbReference type="SUPFAM" id="SSF46689">
    <property type="entry name" value="Homeodomain-like"/>
    <property type="match status" value="1"/>
</dbReference>
<dbReference type="PROSITE" id="PS50071">
    <property type="entry name" value="HOMEOBOX_2"/>
    <property type="match status" value="1"/>
</dbReference>